<reference key="1">
    <citation type="journal article" date="2007" name="PLoS ONE">
        <title>Analysis of the neurotoxin complex genes in Clostridium botulinum A1-A4 and B1 strains: BoNT/A3, /Ba4 and /B1 clusters are located within plasmids.</title>
        <authorList>
            <person name="Smith T.J."/>
            <person name="Hill K.K."/>
            <person name="Foley B.T."/>
            <person name="Detter J.C."/>
            <person name="Munk A.C."/>
            <person name="Bruce D.C."/>
            <person name="Doggett N.A."/>
            <person name="Smith L.A."/>
            <person name="Marks J.D."/>
            <person name="Xie G."/>
            <person name="Brettin T.S."/>
        </authorList>
    </citation>
    <scope>NUCLEOTIDE SEQUENCE [LARGE SCALE GENOMIC DNA]</scope>
    <source>
        <strain>Loch Maree / Type A3</strain>
    </source>
</reference>
<accession>B1KW07</accession>
<name>BIOD_CLOBM</name>
<proteinExistence type="inferred from homology"/>
<gene>
    <name evidence="1" type="primary">bioD</name>
    <name type="ordered locus">CLK_1701</name>
</gene>
<sequence length="227" mass="25344">MARGVFITATGTDIGKTYVTALIIKKLREVNINCGYYKAALSGAERIDSKLIAGDANYVYNIANIKGDPNDAVSYIFQQAVSPHLAAKLNNVEISMDKIKKDFSCIKNKYDYITVEGSGGIICPISMGKEKIMLENIVKSLKLPAIVIADAGLGTINNTILTLQYMKKKNIPIKMILLNNYNHENIIHIENKRYLSDNLSIPVYTCCKDSNNLEIPVERLIEFYEEI</sequence>
<feature type="chain" id="PRO_1000119868" description="ATP-dependent dethiobiotin synthetase BioD">
    <location>
        <begin position="1"/>
        <end position="227"/>
    </location>
</feature>
<feature type="active site" evidence="1">
    <location>
        <position position="38"/>
    </location>
</feature>
<feature type="binding site" evidence="1">
    <location>
        <begin position="13"/>
        <end position="18"/>
    </location>
    <ligand>
        <name>ATP</name>
        <dbReference type="ChEBI" id="CHEBI:30616"/>
    </ligand>
</feature>
<feature type="binding site" evidence="1">
    <location>
        <position position="17"/>
    </location>
    <ligand>
        <name>Mg(2+)</name>
        <dbReference type="ChEBI" id="CHEBI:18420"/>
    </ligand>
</feature>
<feature type="binding site" evidence="1">
    <location>
        <position position="42"/>
    </location>
    <ligand>
        <name>substrate</name>
    </ligand>
</feature>
<feature type="binding site" evidence="1">
    <location>
        <position position="55"/>
    </location>
    <ligand>
        <name>ATP</name>
        <dbReference type="ChEBI" id="CHEBI:30616"/>
    </ligand>
</feature>
<feature type="binding site" evidence="1">
    <location>
        <position position="55"/>
    </location>
    <ligand>
        <name>Mg(2+)</name>
        <dbReference type="ChEBI" id="CHEBI:18420"/>
    </ligand>
</feature>
<feature type="binding site" evidence="1">
    <location>
        <begin position="116"/>
        <end position="119"/>
    </location>
    <ligand>
        <name>ATP</name>
        <dbReference type="ChEBI" id="CHEBI:30616"/>
    </ligand>
</feature>
<feature type="binding site" evidence="1">
    <location>
        <position position="116"/>
    </location>
    <ligand>
        <name>Mg(2+)</name>
        <dbReference type="ChEBI" id="CHEBI:18420"/>
    </ligand>
</feature>
<feature type="binding site" evidence="1">
    <location>
        <begin position="179"/>
        <end position="180"/>
    </location>
    <ligand>
        <name>ATP</name>
        <dbReference type="ChEBI" id="CHEBI:30616"/>
    </ligand>
</feature>
<comment type="function">
    <text evidence="1">Catalyzes a mechanistically unusual reaction, the ATP-dependent insertion of CO2 between the N7 and N8 nitrogen atoms of 7,8-diaminopelargonic acid (DAPA, also called 7,8-diammoniononanoate) to form a ureido ring.</text>
</comment>
<comment type="catalytic activity">
    <reaction evidence="1">
        <text>(7R,8S)-7,8-diammoniononanoate + CO2 + ATP = (4R,5S)-dethiobiotin + ADP + phosphate + 3 H(+)</text>
        <dbReference type="Rhea" id="RHEA:15805"/>
        <dbReference type="ChEBI" id="CHEBI:15378"/>
        <dbReference type="ChEBI" id="CHEBI:16526"/>
        <dbReference type="ChEBI" id="CHEBI:30616"/>
        <dbReference type="ChEBI" id="CHEBI:43474"/>
        <dbReference type="ChEBI" id="CHEBI:149469"/>
        <dbReference type="ChEBI" id="CHEBI:149473"/>
        <dbReference type="ChEBI" id="CHEBI:456216"/>
        <dbReference type="EC" id="6.3.3.3"/>
    </reaction>
</comment>
<comment type="cofactor">
    <cofactor evidence="1">
        <name>Mg(2+)</name>
        <dbReference type="ChEBI" id="CHEBI:18420"/>
    </cofactor>
</comment>
<comment type="pathway">
    <text evidence="1">Cofactor biosynthesis; biotin biosynthesis; biotin from 7,8-diaminononanoate: step 1/2.</text>
</comment>
<comment type="subunit">
    <text evidence="1">Homodimer.</text>
</comment>
<comment type="subcellular location">
    <subcellularLocation>
        <location evidence="1">Cytoplasm</location>
    </subcellularLocation>
</comment>
<comment type="similarity">
    <text evidence="1">Belongs to the dethiobiotin synthetase family.</text>
</comment>
<keyword id="KW-0067">ATP-binding</keyword>
<keyword id="KW-0093">Biotin biosynthesis</keyword>
<keyword id="KW-0963">Cytoplasm</keyword>
<keyword id="KW-0436">Ligase</keyword>
<keyword id="KW-0460">Magnesium</keyword>
<keyword id="KW-0479">Metal-binding</keyword>
<keyword id="KW-0547">Nucleotide-binding</keyword>
<organism>
    <name type="scientific">Clostridium botulinum (strain Loch Maree / Type A3)</name>
    <dbReference type="NCBI Taxonomy" id="498214"/>
    <lineage>
        <taxon>Bacteria</taxon>
        <taxon>Bacillati</taxon>
        <taxon>Bacillota</taxon>
        <taxon>Clostridia</taxon>
        <taxon>Eubacteriales</taxon>
        <taxon>Clostridiaceae</taxon>
        <taxon>Clostridium</taxon>
    </lineage>
</organism>
<evidence type="ECO:0000255" key="1">
    <source>
        <dbReference type="HAMAP-Rule" id="MF_00336"/>
    </source>
</evidence>
<dbReference type="EC" id="6.3.3.3" evidence="1"/>
<dbReference type="EMBL" id="CP000962">
    <property type="protein sequence ID" value="ACA56773.1"/>
    <property type="molecule type" value="Genomic_DNA"/>
</dbReference>
<dbReference type="RefSeq" id="WP_012344596.1">
    <property type="nucleotide sequence ID" value="NC_010520.1"/>
</dbReference>
<dbReference type="SMR" id="B1KW07"/>
<dbReference type="KEGG" id="cbl:CLK_1701"/>
<dbReference type="HOGENOM" id="CLU_072551_3_0_9"/>
<dbReference type="UniPathway" id="UPA00078">
    <property type="reaction ID" value="UER00161"/>
</dbReference>
<dbReference type="GO" id="GO:0005829">
    <property type="term" value="C:cytosol"/>
    <property type="evidence" value="ECO:0007669"/>
    <property type="project" value="TreeGrafter"/>
</dbReference>
<dbReference type="GO" id="GO:0005524">
    <property type="term" value="F:ATP binding"/>
    <property type="evidence" value="ECO:0007669"/>
    <property type="project" value="UniProtKB-UniRule"/>
</dbReference>
<dbReference type="GO" id="GO:0004141">
    <property type="term" value="F:dethiobiotin synthase activity"/>
    <property type="evidence" value="ECO:0007669"/>
    <property type="project" value="UniProtKB-UniRule"/>
</dbReference>
<dbReference type="GO" id="GO:0000287">
    <property type="term" value="F:magnesium ion binding"/>
    <property type="evidence" value="ECO:0007669"/>
    <property type="project" value="UniProtKB-UniRule"/>
</dbReference>
<dbReference type="GO" id="GO:0009102">
    <property type="term" value="P:biotin biosynthetic process"/>
    <property type="evidence" value="ECO:0007669"/>
    <property type="project" value="UniProtKB-UniRule"/>
</dbReference>
<dbReference type="CDD" id="cd03109">
    <property type="entry name" value="DTBS"/>
    <property type="match status" value="1"/>
</dbReference>
<dbReference type="Gene3D" id="3.40.50.300">
    <property type="entry name" value="P-loop containing nucleotide triphosphate hydrolases"/>
    <property type="match status" value="1"/>
</dbReference>
<dbReference type="HAMAP" id="MF_00336">
    <property type="entry name" value="BioD"/>
    <property type="match status" value="1"/>
</dbReference>
<dbReference type="InterPro" id="IPR004472">
    <property type="entry name" value="DTB_synth_BioD"/>
</dbReference>
<dbReference type="InterPro" id="IPR027417">
    <property type="entry name" value="P-loop_NTPase"/>
</dbReference>
<dbReference type="NCBIfam" id="TIGR00347">
    <property type="entry name" value="bioD"/>
    <property type="match status" value="1"/>
</dbReference>
<dbReference type="PANTHER" id="PTHR43210:SF2">
    <property type="entry name" value="ATP-DEPENDENT DETHIOBIOTIN SYNTHETASE BIOD 2"/>
    <property type="match status" value="1"/>
</dbReference>
<dbReference type="PANTHER" id="PTHR43210">
    <property type="entry name" value="DETHIOBIOTIN SYNTHETASE"/>
    <property type="match status" value="1"/>
</dbReference>
<dbReference type="Pfam" id="PF13500">
    <property type="entry name" value="AAA_26"/>
    <property type="match status" value="1"/>
</dbReference>
<dbReference type="PIRSF" id="PIRSF006755">
    <property type="entry name" value="DTB_synth"/>
    <property type="match status" value="1"/>
</dbReference>
<dbReference type="SUPFAM" id="SSF52540">
    <property type="entry name" value="P-loop containing nucleoside triphosphate hydrolases"/>
    <property type="match status" value="1"/>
</dbReference>
<protein>
    <recommendedName>
        <fullName evidence="1">ATP-dependent dethiobiotin synthetase BioD</fullName>
        <ecNumber evidence="1">6.3.3.3</ecNumber>
    </recommendedName>
    <alternativeName>
        <fullName evidence="1">DTB synthetase</fullName>
        <shortName evidence="1">DTBS</shortName>
    </alternativeName>
    <alternativeName>
        <fullName evidence="1">Dethiobiotin synthase</fullName>
    </alternativeName>
</protein>